<gene>
    <name evidence="1" type="primary">mgsA</name>
    <name type="ordered locus">RBAM_020630</name>
</gene>
<evidence type="ECO:0000255" key="1">
    <source>
        <dbReference type="HAMAP-Rule" id="MF_00549"/>
    </source>
</evidence>
<feature type="chain" id="PRO_1000017783" description="Methylglyoxal synthase">
    <location>
        <begin position="1"/>
        <end position="137"/>
    </location>
</feature>
<feature type="domain" description="MGS-like" evidence="1">
    <location>
        <begin position="1"/>
        <end position="137"/>
    </location>
</feature>
<feature type="active site" description="Proton donor/acceptor" evidence="1">
    <location>
        <position position="60"/>
    </location>
</feature>
<feature type="binding site" evidence="1">
    <location>
        <position position="8"/>
    </location>
    <ligand>
        <name>substrate</name>
    </ligand>
</feature>
<feature type="binding site" evidence="1">
    <location>
        <position position="12"/>
    </location>
    <ligand>
        <name>substrate</name>
    </ligand>
</feature>
<feature type="binding site" evidence="1">
    <location>
        <begin position="34"/>
        <end position="37"/>
    </location>
    <ligand>
        <name>substrate</name>
    </ligand>
</feature>
<feature type="binding site" evidence="1">
    <location>
        <begin position="54"/>
        <end position="55"/>
    </location>
    <ligand>
        <name>substrate</name>
    </ligand>
</feature>
<feature type="binding site" evidence="1">
    <location>
        <position position="87"/>
    </location>
    <ligand>
        <name>substrate</name>
    </ligand>
</feature>
<proteinExistence type="inferred from homology"/>
<organism>
    <name type="scientific">Bacillus velezensis (strain DSM 23117 / BGSC 10A6 / LMG 26770 / FZB42)</name>
    <name type="common">Bacillus amyloliquefaciens subsp. plantarum</name>
    <dbReference type="NCBI Taxonomy" id="326423"/>
    <lineage>
        <taxon>Bacteria</taxon>
        <taxon>Bacillati</taxon>
        <taxon>Bacillota</taxon>
        <taxon>Bacilli</taxon>
        <taxon>Bacillales</taxon>
        <taxon>Bacillaceae</taxon>
        <taxon>Bacillus</taxon>
        <taxon>Bacillus amyloliquefaciens group</taxon>
    </lineage>
</organism>
<accession>A7Z5Z9</accession>
<sequence>MKIALIAHDKKKQDMVQFTTAYKDILSHHELYATGTTGLKIQEATGLSVERFQSGPLGGDQQIGALIAANALDLVIFLRDPLTAQPHEPDVSALIRLCDVYAIPLATNMGTAEILVRTLDGGAFDFRNLVRGGEPNV</sequence>
<keyword id="KW-0456">Lyase</keyword>
<reference key="1">
    <citation type="journal article" date="2007" name="Nat. Biotechnol.">
        <title>Comparative analysis of the complete genome sequence of the plant growth-promoting bacterium Bacillus amyloliquefaciens FZB42.</title>
        <authorList>
            <person name="Chen X.H."/>
            <person name="Koumoutsi A."/>
            <person name="Scholz R."/>
            <person name="Eisenreich A."/>
            <person name="Schneider K."/>
            <person name="Heinemeyer I."/>
            <person name="Morgenstern B."/>
            <person name="Voss B."/>
            <person name="Hess W.R."/>
            <person name="Reva O."/>
            <person name="Junge H."/>
            <person name="Voigt B."/>
            <person name="Jungblut P.R."/>
            <person name="Vater J."/>
            <person name="Suessmuth R."/>
            <person name="Liesegang H."/>
            <person name="Strittmatter A."/>
            <person name="Gottschalk G."/>
            <person name="Borriss R."/>
        </authorList>
    </citation>
    <scope>NUCLEOTIDE SEQUENCE [LARGE SCALE GENOMIC DNA]</scope>
    <source>
        <strain>DSM 23117 / BGSC 10A6 / LMG 26770 / FZB42</strain>
    </source>
</reference>
<name>MGSA_BACVZ</name>
<dbReference type="EC" id="4.2.3.3" evidence="1"/>
<dbReference type="EMBL" id="CP000560">
    <property type="protein sequence ID" value="ABS74425.1"/>
    <property type="molecule type" value="Genomic_DNA"/>
</dbReference>
<dbReference type="RefSeq" id="WP_003153499.1">
    <property type="nucleotide sequence ID" value="NC_009725.2"/>
</dbReference>
<dbReference type="SMR" id="A7Z5Z9"/>
<dbReference type="GeneID" id="93081198"/>
<dbReference type="KEGG" id="bay:RBAM_020630"/>
<dbReference type="HOGENOM" id="CLU_120420_1_0_9"/>
<dbReference type="Proteomes" id="UP000001120">
    <property type="component" value="Chromosome"/>
</dbReference>
<dbReference type="GO" id="GO:0005829">
    <property type="term" value="C:cytosol"/>
    <property type="evidence" value="ECO:0007669"/>
    <property type="project" value="TreeGrafter"/>
</dbReference>
<dbReference type="GO" id="GO:0008929">
    <property type="term" value="F:methylglyoxal synthase activity"/>
    <property type="evidence" value="ECO:0007669"/>
    <property type="project" value="UniProtKB-UniRule"/>
</dbReference>
<dbReference type="GO" id="GO:0019242">
    <property type="term" value="P:methylglyoxal biosynthetic process"/>
    <property type="evidence" value="ECO:0007669"/>
    <property type="project" value="UniProtKB-UniRule"/>
</dbReference>
<dbReference type="CDD" id="cd01422">
    <property type="entry name" value="MGS"/>
    <property type="match status" value="1"/>
</dbReference>
<dbReference type="FunFam" id="3.40.50.1380:FF:000006">
    <property type="entry name" value="Methylglyoxal synthase"/>
    <property type="match status" value="1"/>
</dbReference>
<dbReference type="Gene3D" id="3.40.50.1380">
    <property type="entry name" value="Methylglyoxal synthase-like domain"/>
    <property type="match status" value="1"/>
</dbReference>
<dbReference type="HAMAP" id="MF_00549">
    <property type="entry name" value="Methylglyoxal_synth"/>
    <property type="match status" value="1"/>
</dbReference>
<dbReference type="InterPro" id="IPR004363">
    <property type="entry name" value="Methylgl_synth"/>
</dbReference>
<dbReference type="InterPro" id="IPR018148">
    <property type="entry name" value="Methylglyoxal_synth_AS"/>
</dbReference>
<dbReference type="InterPro" id="IPR011607">
    <property type="entry name" value="MGS-like_dom"/>
</dbReference>
<dbReference type="InterPro" id="IPR036914">
    <property type="entry name" value="MGS-like_dom_sf"/>
</dbReference>
<dbReference type="NCBIfam" id="TIGR00160">
    <property type="entry name" value="MGSA"/>
    <property type="match status" value="1"/>
</dbReference>
<dbReference type="NCBIfam" id="NF003559">
    <property type="entry name" value="PRK05234.1"/>
    <property type="match status" value="1"/>
</dbReference>
<dbReference type="PANTHER" id="PTHR30492">
    <property type="entry name" value="METHYLGLYOXAL SYNTHASE"/>
    <property type="match status" value="1"/>
</dbReference>
<dbReference type="PANTHER" id="PTHR30492:SF0">
    <property type="entry name" value="METHYLGLYOXAL SYNTHASE"/>
    <property type="match status" value="1"/>
</dbReference>
<dbReference type="Pfam" id="PF02142">
    <property type="entry name" value="MGS"/>
    <property type="match status" value="1"/>
</dbReference>
<dbReference type="PIRSF" id="PIRSF006614">
    <property type="entry name" value="Methylglyox_syn"/>
    <property type="match status" value="1"/>
</dbReference>
<dbReference type="SMART" id="SM00851">
    <property type="entry name" value="MGS"/>
    <property type="match status" value="1"/>
</dbReference>
<dbReference type="SUPFAM" id="SSF52335">
    <property type="entry name" value="Methylglyoxal synthase-like"/>
    <property type="match status" value="1"/>
</dbReference>
<dbReference type="PROSITE" id="PS01335">
    <property type="entry name" value="METHYLGLYOXAL_SYNTH"/>
    <property type="match status" value="1"/>
</dbReference>
<dbReference type="PROSITE" id="PS51855">
    <property type="entry name" value="MGS"/>
    <property type="match status" value="1"/>
</dbReference>
<protein>
    <recommendedName>
        <fullName evidence="1">Methylglyoxal synthase</fullName>
        <shortName evidence="1">MGS</shortName>
        <ecNumber evidence="1">4.2.3.3</ecNumber>
    </recommendedName>
</protein>
<comment type="function">
    <text evidence="1">Catalyzes the formation of methylglyoxal from dihydroxyacetone phosphate.</text>
</comment>
<comment type="catalytic activity">
    <reaction evidence="1">
        <text>dihydroxyacetone phosphate = methylglyoxal + phosphate</text>
        <dbReference type="Rhea" id="RHEA:17937"/>
        <dbReference type="ChEBI" id="CHEBI:17158"/>
        <dbReference type="ChEBI" id="CHEBI:43474"/>
        <dbReference type="ChEBI" id="CHEBI:57642"/>
        <dbReference type="EC" id="4.2.3.3"/>
    </reaction>
</comment>
<comment type="similarity">
    <text evidence="1">Belongs to the methylglyoxal synthase family.</text>
</comment>